<protein>
    <recommendedName>
        <fullName>Uncharacterized tRNA/rRNA methyltransferase Mvan_5337</fullName>
        <ecNumber>2.1.1.-</ecNumber>
    </recommendedName>
</protein>
<gene>
    <name type="ordered locus">Mvan_5337</name>
</gene>
<keyword id="KW-0489">Methyltransferase</keyword>
<keyword id="KW-0949">S-adenosyl-L-methionine</keyword>
<keyword id="KW-0808">Transferase</keyword>
<dbReference type="EC" id="2.1.1.-"/>
<dbReference type="EMBL" id="CP000511">
    <property type="protein sequence ID" value="ABM16108.1"/>
    <property type="molecule type" value="Genomic_DNA"/>
</dbReference>
<dbReference type="SMR" id="A1TG08"/>
<dbReference type="STRING" id="350058.Mvan_5337"/>
<dbReference type="KEGG" id="mva:Mvan_5337"/>
<dbReference type="eggNOG" id="COG0566">
    <property type="taxonomic scope" value="Bacteria"/>
</dbReference>
<dbReference type="HOGENOM" id="CLU_021322_0_0_11"/>
<dbReference type="Proteomes" id="UP000009159">
    <property type="component" value="Chromosome"/>
</dbReference>
<dbReference type="GO" id="GO:0005829">
    <property type="term" value="C:cytosol"/>
    <property type="evidence" value="ECO:0007669"/>
    <property type="project" value="TreeGrafter"/>
</dbReference>
<dbReference type="GO" id="GO:0003723">
    <property type="term" value="F:RNA binding"/>
    <property type="evidence" value="ECO:0007669"/>
    <property type="project" value="InterPro"/>
</dbReference>
<dbReference type="GO" id="GO:0008173">
    <property type="term" value="F:RNA methyltransferase activity"/>
    <property type="evidence" value="ECO:0007669"/>
    <property type="project" value="InterPro"/>
</dbReference>
<dbReference type="GO" id="GO:0032259">
    <property type="term" value="P:methylation"/>
    <property type="evidence" value="ECO:0007669"/>
    <property type="project" value="UniProtKB-KW"/>
</dbReference>
<dbReference type="GO" id="GO:0006396">
    <property type="term" value="P:RNA processing"/>
    <property type="evidence" value="ECO:0007669"/>
    <property type="project" value="InterPro"/>
</dbReference>
<dbReference type="CDD" id="cd18103">
    <property type="entry name" value="SpoU-like_RlmB"/>
    <property type="match status" value="1"/>
</dbReference>
<dbReference type="FunFam" id="3.30.1330.30:FF:000024">
    <property type="entry name" value="Putative tRNA/rRNA methyltransferase"/>
    <property type="match status" value="1"/>
</dbReference>
<dbReference type="FunFam" id="3.40.1280.10:FF:000015">
    <property type="entry name" value="Putative tRNA/rRNA methyltransferase"/>
    <property type="match status" value="1"/>
</dbReference>
<dbReference type="Gene3D" id="3.30.1330.30">
    <property type="match status" value="1"/>
</dbReference>
<dbReference type="Gene3D" id="3.40.1280.10">
    <property type="match status" value="1"/>
</dbReference>
<dbReference type="InterPro" id="IPR029028">
    <property type="entry name" value="Alpha/beta_knot_MTases"/>
</dbReference>
<dbReference type="InterPro" id="IPR029064">
    <property type="entry name" value="Ribosomal_eL30-like_sf"/>
</dbReference>
<dbReference type="InterPro" id="IPR004441">
    <property type="entry name" value="rRNA_MeTrfase_TrmH"/>
</dbReference>
<dbReference type="InterPro" id="IPR001537">
    <property type="entry name" value="SpoU_MeTrfase"/>
</dbReference>
<dbReference type="InterPro" id="IPR013123">
    <property type="entry name" value="SpoU_subst-bd"/>
</dbReference>
<dbReference type="InterPro" id="IPR029026">
    <property type="entry name" value="tRNA_m1G_MTases_N"/>
</dbReference>
<dbReference type="NCBIfam" id="TIGR00186">
    <property type="entry name" value="rRNA_methyl_3"/>
    <property type="match status" value="1"/>
</dbReference>
<dbReference type="PANTHER" id="PTHR46429">
    <property type="entry name" value="23S RRNA (GUANOSINE-2'-O-)-METHYLTRANSFERASE RLMB"/>
    <property type="match status" value="1"/>
</dbReference>
<dbReference type="PANTHER" id="PTHR46429:SF1">
    <property type="entry name" value="23S RRNA (GUANOSINE-2'-O-)-METHYLTRANSFERASE RLMB"/>
    <property type="match status" value="1"/>
</dbReference>
<dbReference type="Pfam" id="PF00588">
    <property type="entry name" value="SpoU_methylase"/>
    <property type="match status" value="1"/>
</dbReference>
<dbReference type="Pfam" id="PF08032">
    <property type="entry name" value="SpoU_sub_bind"/>
    <property type="match status" value="1"/>
</dbReference>
<dbReference type="SMART" id="SM00967">
    <property type="entry name" value="SpoU_sub_bind"/>
    <property type="match status" value="1"/>
</dbReference>
<dbReference type="SUPFAM" id="SSF75217">
    <property type="entry name" value="alpha/beta knot"/>
    <property type="match status" value="1"/>
</dbReference>
<dbReference type="SUPFAM" id="SSF55315">
    <property type="entry name" value="L30e-like"/>
    <property type="match status" value="1"/>
</dbReference>
<reference key="1">
    <citation type="submission" date="2006-12" db="EMBL/GenBank/DDBJ databases">
        <title>Complete sequence of Mycobacterium vanbaalenii PYR-1.</title>
        <authorList>
            <consortium name="US DOE Joint Genome Institute"/>
            <person name="Copeland A."/>
            <person name="Lucas S."/>
            <person name="Lapidus A."/>
            <person name="Barry K."/>
            <person name="Detter J.C."/>
            <person name="Glavina del Rio T."/>
            <person name="Hammon N."/>
            <person name="Israni S."/>
            <person name="Dalin E."/>
            <person name="Tice H."/>
            <person name="Pitluck S."/>
            <person name="Singan V."/>
            <person name="Schmutz J."/>
            <person name="Larimer F."/>
            <person name="Land M."/>
            <person name="Hauser L."/>
            <person name="Kyrpides N."/>
            <person name="Anderson I.J."/>
            <person name="Miller C."/>
            <person name="Richardson P."/>
        </authorList>
    </citation>
    <scope>NUCLEOTIDE SEQUENCE [LARGE SCALE GENOMIC DNA]</scope>
    <source>
        <strain>DSM 7251 / JCM 13017 / BCRC 16820 / KCTC 9966 / NRRL B-24157 / PYR-1</strain>
    </source>
</reference>
<evidence type="ECO:0000250" key="1"/>
<evidence type="ECO:0000256" key="2">
    <source>
        <dbReference type="SAM" id="MobiDB-lite"/>
    </source>
</evidence>
<evidence type="ECO:0000305" key="3"/>
<sequence length="314" mass="32520">MAGNSQRRGAVRKAGTKKGPTVGSGGVRRRGLEGKGATPPAHQRPHHPAGKRAAKAARQAQGRHKKTDDTEIVLGRNPVLECLRAGVPATALYVALGADSDERLTESVQIAADKGIAILEVPRHDLDRIAANGMHQGIALQVPPYNYAHPDDLLAEAKSDAMPALLVALDNISDPRNLGAIVRSVAAFGGHGVLIPQRRSASVTAVAWRTSAGAAARTPVARATNLTRALKQWADAGLQVVGLDADGDTTVDQIDGAGPIVVVVGSEGKGLSRLVRENCDAVVSIPMAGPTESLNASVAAGVVLAEIARQRRSA</sequence>
<name>Y5337_MYCVP</name>
<comment type="similarity">
    <text evidence="3">Belongs to the class IV-like SAM-binding methyltransferase superfamily. RNA methyltransferase TrmH family.</text>
</comment>
<accession>A1TG08</accession>
<proteinExistence type="inferred from homology"/>
<feature type="chain" id="PRO_0000379584" description="Uncharacterized tRNA/rRNA methyltransferase Mvan_5337">
    <location>
        <begin position="1"/>
        <end position="314"/>
    </location>
</feature>
<feature type="region of interest" description="Disordered" evidence="2">
    <location>
        <begin position="1"/>
        <end position="70"/>
    </location>
</feature>
<feature type="compositionally biased region" description="Basic residues" evidence="2">
    <location>
        <begin position="43"/>
        <end position="65"/>
    </location>
</feature>
<feature type="binding site" evidence="1">
    <location>
        <position position="265"/>
    </location>
    <ligand>
        <name>S-adenosyl-L-methionine</name>
        <dbReference type="ChEBI" id="CHEBI:59789"/>
    </ligand>
</feature>
<feature type="binding site" evidence="1">
    <location>
        <position position="285"/>
    </location>
    <ligand>
        <name>S-adenosyl-L-methionine</name>
        <dbReference type="ChEBI" id="CHEBI:59789"/>
    </ligand>
</feature>
<feature type="binding site" evidence="1">
    <location>
        <position position="294"/>
    </location>
    <ligand>
        <name>S-adenosyl-L-methionine</name>
        <dbReference type="ChEBI" id="CHEBI:59789"/>
    </ligand>
</feature>
<organism>
    <name type="scientific">Mycolicibacterium vanbaalenii (strain DSM 7251 / JCM 13017 / BCRC 16820 / KCTC 9966 / NRRL B-24157 / PYR-1)</name>
    <name type="common">Mycobacterium vanbaalenii</name>
    <dbReference type="NCBI Taxonomy" id="350058"/>
    <lineage>
        <taxon>Bacteria</taxon>
        <taxon>Bacillati</taxon>
        <taxon>Actinomycetota</taxon>
        <taxon>Actinomycetes</taxon>
        <taxon>Mycobacteriales</taxon>
        <taxon>Mycobacteriaceae</taxon>
        <taxon>Mycolicibacterium</taxon>
    </lineage>
</organism>